<proteinExistence type="inferred from homology"/>
<protein>
    <recommendedName>
        <fullName evidence="1">thr operon leader peptide</fullName>
    </recommendedName>
    <alternativeName>
        <fullName evidence="1">thr operon attenuator</fullName>
    </alternativeName>
</protein>
<reference key="1">
    <citation type="journal article" date="2004" name="Nat. Genet.">
        <title>Comparison of genome degradation in Paratyphi A and Typhi, human-restricted serovars of Salmonella enterica that cause typhoid.</title>
        <authorList>
            <person name="McClelland M."/>
            <person name="Sanderson K.E."/>
            <person name="Clifton S.W."/>
            <person name="Latreille P."/>
            <person name="Porwollik S."/>
            <person name="Sabo A."/>
            <person name="Meyer R."/>
            <person name="Bieri T."/>
            <person name="Ozersky P."/>
            <person name="McLellan M."/>
            <person name="Harkins C.R."/>
            <person name="Wang C."/>
            <person name="Nguyen C."/>
            <person name="Berghoff A."/>
            <person name="Elliott G."/>
            <person name="Kohlberg S."/>
            <person name="Strong C."/>
            <person name="Du F."/>
            <person name="Carter J."/>
            <person name="Kremizki C."/>
            <person name="Layman D."/>
            <person name="Leonard S."/>
            <person name="Sun H."/>
            <person name="Fulton L."/>
            <person name="Nash W."/>
            <person name="Miner T."/>
            <person name="Minx P."/>
            <person name="Delehaunty K."/>
            <person name="Fronick C."/>
            <person name="Magrini V."/>
            <person name="Nhan M."/>
            <person name="Warren W."/>
            <person name="Florea L."/>
            <person name="Spieth J."/>
            <person name="Wilson R.K."/>
        </authorList>
    </citation>
    <scope>NUCLEOTIDE SEQUENCE [LARGE SCALE GENOMIC DNA]</scope>
    <source>
        <strain>ATCC 9150 / SARB42</strain>
    </source>
</reference>
<name>LPT_SALPA</name>
<keyword id="KW-0028">Amino-acid biosynthesis</keyword>
<keyword id="KW-0428">Leader peptide</keyword>
<keyword id="KW-0791">Threonine biosynthesis</keyword>
<sequence>MNRISTTTITTITITTGNGAG</sequence>
<accession>Q5PDM5</accession>
<dbReference type="EMBL" id="CP000026">
    <property type="protein sequence ID" value="AAV76040.1"/>
    <property type="molecule type" value="Genomic_DNA"/>
</dbReference>
<dbReference type="RefSeq" id="WP_001575544.1">
    <property type="nucleotide sequence ID" value="NC_006511.1"/>
</dbReference>
<dbReference type="KEGG" id="spt:SPA0001"/>
<dbReference type="HOGENOM" id="CLU_221491_0_1_6"/>
<dbReference type="Proteomes" id="UP000008185">
    <property type="component" value="Chromosome"/>
</dbReference>
<dbReference type="GO" id="GO:0009088">
    <property type="term" value="P:threonine biosynthetic process"/>
    <property type="evidence" value="ECO:0007669"/>
    <property type="project" value="UniProtKB-UniRule"/>
</dbReference>
<dbReference type="GO" id="GO:0031556">
    <property type="term" value="P:transcriptional attenuation by ribosome"/>
    <property type="evidence" value="ECO:0007669"/>
    <property type="project" value="UniProtKB-UniRule"/>
</dbReference>
<dbReference type="HAMAP" id="MF_01907">
    <property type="entry name" value="Leader_Thr"/>
    <property type="match status" value="1"/>
</dbReference>
<dbReference type="InterPro" id="IPR011720">
    <property type="entry name" value="Thr_lead_pept"/>
</dbReference>
<dbReference type="NCBIfam" id="NF007329">
    <property type="entry name" value="PRK09816.1"/>
    <property type="match status" value="1"/>
</dbReference>
<dbReference type="NCBIfam" id="TIGR02077">
    <property type="entry name" value="thr_lead_pep"/>
    <property type="match status" value="1"/>
</dbReference>
<dbReference type="Pfam" id="PF08254">
    <property type="entry name" value="Leader_Thr"/>
    <property type="match status" value="1"/>
</dbReference>
<organism>
    <name type="scientific">Salmonella paratyphi A (strain ATCC 9150 / SARB42)</name>
    <dbReference type="NCBI Taxonomy" id="295319"/>
    <lineage>
        <taxon>Bacteria</taxon>
        <taxon>Pseudomonadati</taxon>
        <taxon>Pseudomonadota</taxon>
        <taxon>Gammaproteobacteria</taxon>
        <taxon>Enterobacterales</taxon>
        <taxon>Enterobacteriaceae</taxon>
        <taxon>Salmonella</taxon>
    </lineage>
</organism>
<feature type="peptide" id="PRO_0000312889" description="thr operon leader peptide">
    <location>
        <begin position="1"/>
        <end position="21"/>
    </location>
</feature>
<comment type="function">
    <text evidence="1">This protein is involved in control of the biosynthesis of threonine.</text>
</comment>
<comment type="similarity">
    <text evidence="1">Belongs to the thr operon leader peptide family.</text>
</comment>
<evidence type="ECO:0000255" key="1">
    <source>
        <dbReference type="HAMAP-Rule" id="MF_01907"/>
    </source>
</evidence>
<gene>
    <name evidence="1" type="primary">thrL</name>
    <name type="ordered locus">SPA0001</name>
</gene>